<organism>
    <name type="scientific">Saccharomyces cerevisiae (strain ATCC 204508 / S288c)</name>
    <name type="common">Baker's yeast</name>
    <dbReference type="NCBI Taxonomy" id="559292"/>
    <lineage>
        <taxon>Eukaryota</taxon>
        <taxon>Fungi</taxon>
        <taxon>Dikarya</taxon>
        <taxon>Ascomycota</taxon>
        <taxon>Saccharomycotina</taxon>
        <taxon>Saccharomycetes</taxon>
        <taxon>Saccharomycetales</taxon>
        <taxon>Saccharomycetaceae</taxon>
        <taxon>Saccharomyces</taxon>
    </lineage>
</organism>
<accession>P17967</accession>
<accession>D6VQX3</accession>
<name>PDI_YEAST</name>
<sequence length="522" mass="58227">MKFSAGAVLSWSSLLLASSVFAQQEAVAPEDSAVVKLATDSFNEYIQSHDLVLAEFFAPWCGHCKNMAPEYVKAAETLVEKNITLAQIDCTENQDLCMEHNIPGFPSLKIFKNSDVNNSIDYEGPRTAEAIVQFMIKQSQPAVAVVADLPAYLANETFVTPVIVQSGKIDADFNATFYSMANKHFNDYDFVSAENADDDFKLSIYLPSAMDEPVVYNGKKADIADADVFEKWLQVEALPYFGEIDGSVFAQYVESGLPLGYLFYNDEEELEEYKPLFTELAKKNRGLMNFVSIDARKFGRHAGNLNMKEQFPLFAIHDMTEDLKYGLPQLSEEAFDELSDKIVLESKAIESLVKDFLKGDASPIVKSQEIFENQDSSVFQLVGKNHDEIVNDPKKDVLVLYYAPWCGHCKRLAPTYQELADTYANATSDVLIAKLDHTENDVRGVVIEGYPTIVLYPGGKKSESVVYQGSRSLDSLFDFIKENGHFDVDGKALYEEAQEKAAEEADADAELADEEDAIHDEL</sequence>
<keyword id="KW-0002">3D-structure</keyword>
<keyword id="KW-0903">Direct protein sequencing</keyword>
<keyword id="KW-1015">Disulfide bond</keyword>
<keyword id="KW-0256">Endoplasmic reticulum</keyword>
<keyword id="KW-0325">Glycoprotein</keyword>
<keyword id="KW-0413">Isomerase</keyword>
<keyword id="KW-0676">Redox-active center</keyword>
<keyword id="KW-1185">Reference proteome</keyword>
<keyword id="KW-0677">Repeat</keyword>
<keyword id="KW-0732">Signal</keyword>
<gene>
    <name type="primary">PDI1</name>
    <name type="synonym">MFP1</name>
    <name type="synonym">TRG1</name>
    <name type="ordered locus">YCL043C</name>
    <name type="ORF">YCL313</name>
    <name type="ORF">YCL43C</name>
</gene>
<dbReference type="EC" id="5.3.4.1"/>
<dbReference type="EMBL" id="D00842">
    <property type="protein sequence ID" value="BAA00723.1"/>
    <property type="molecule type" value="Genomic_DNA"/>
</dbReference>
<dbReference type="EMBL" id="X57712">
    <property type="protein sequence ID" value="CAA40883.1"/>
    <property type="molecule type" value="Genomic_DNA"/>
</dbReference>
<dbReference type="EMBL" id="M62815">
    <property type="protein sequence ID" value="AAA34848.1"/>
    <property type="molecule type" value="Genomic_DNA"/>
</dbReference>
<dbReference type="EMBL" id="X52313">
    <property type="protein sequence ID" value="CAA36550.1"/>
    <property type="molecule type" value="Genomic_DNA"/>
</dbReference>
<dbReference type="EMBL" id="M76982">
    <property type="protein sequence ID" value="AAA35169.1"/>
    <property type="molecule type" value="Genomic_DNA"/>
</dbReference>
<dbReference type="EMBL" id="X54535">
    <property type="protein sequence ID" value="CAA38402.1"/>
    <property type="molecule type" value="Genomic_DNA"/>
</dbReference>
<dbReference type="EMBL" id="X59720">
    <property type="protein sequence ID" value="CAA42373.1"/>
    <property type="molecule type" value="Genomic_DNA"/>
</dbReference>
<dbReference type="EMBL" id="BK006937">
    <property type="protein sequence ID" value="DAA07442.1"/>
    <property type="molecule type" value="Genomic_DNA"/>
</dbReference>
<dbReference type="PIR" id="JX0182">
    <property type="entry name" value="ISBYSS"/>
</dbReference>
<dbReference type="RefSeq" id="NP_009887.1">
    <property type="nucleotide sequence ID" value="NM_001178688.1"/>
</dbReference>
<dbReference type="PDB" id="2B5E">
    <property type="method" value="X-ray"/>
    <property type="resolution" value="2.40 A"/>
    <property type="chains" value="A=23-522"/>
</dbReference>
<dbReference type="PDB" id="3BOA">
    <property type="method" value="X-ray"/>
    <property type="resolution" value="3.70 A"/>
    <property type="chains" value="A=23-522"/>
</dbReference>
<dbReference type="PDB" id="8ZPW">
    <property type="method" value="EM"/>
    <property type="resolution" value="3.00 A"/>
    <property type="chains" value="B=1-522"/>
</dbReference>
<dbReference type="PDBsum" id="2B5E"/>
<dbReference type="PDBsum" id="3BOA"/>
<dbReference type="PDBsum" id="8ZPW"/>
<dbReference type="EMDB" id="EMD-60365"/>
<dbReference type="SMR" id="P17967"/>
<dbReference type="BioGRID" id="30941">
    <property type="interactions" value="398"/>
</dbReference>
<dbReference type="ComplexPortal" id="CPX-1283">
    <property type="entry name" value="HTM1-PDI1 exomannosidase complex"/>
</dbReference>
<dbReference type="DIP" id="DIP-4978N"/>
<dbReference type="FunCoup" id="P17967">
    <property type="interactions" value="977"/>
</dbReference>
<dbReference type="IntAct" id="P17967">
    <property type="interactions" value="36"/>
</dbReference>
<dbReference type="MINT" id="P17967"/>
<dbReference type="STRING" id="4932.YCL043C"/>
<dbReference type="GlyCosmos" id="P17967">
    <property type="glycosylation" value="5 sites, No reported glycans"/>
</dbReference>
<dbReference type="GlyGen" id="P17967">
    <property type="glycosylation" value="5 sites"/>
</dbReference>
<dbReference type="iPTMnet" id="P17967"/>
<dbReference type="PaxDb" id="4932-YCL043C"/>
<dbReference type="PeptideAtlas" id="P17967"/>
<dbReference type="EnsemblFungi" id="YCL043C_mRNA">
    <property type="protein sequence ID" value="YCL043C"/>
    <property type="gene ID" value="YCL043C"/>
</dbReference>
<dbReference type="GeneID" id="850314"/>
<dbReference type="KEGG" id="sce:YCL043C"/>
<dbReference type="AGR" id="SGD:S000000548"/>
<dbReference type="SGD" id="S000000548">
    <property type="gene designation" value="PDI1"/>
</dbReference>
<dbReference type="VEuPathDB" id="FungiDB:YCL043C"/>
<dbReference type="eggNOG" id="KOG0190">
    <property type="taxonomic scope" value="Eukaryota"/>
</dbReference>
<dbReference type="GeneTree" id="ENSGT00940000168753"/>
<dbReference type="HOGENOM" id="CLU_025879_5_0_1"/>
<dbReference type="InParanoid" id="P17967"/>
<dbReference type="OMA" id="FFGMKKD"/>
<dbReference type="OrthoDB" id="427280at2759"/>
<dbReference type="BioCyc" id="YEAST:YCL043C-MONOMER"/>
<dbReference type="BRENDA" id="5.3.4.1">
    <property type="organism ID" value="984"/>
</dbReference>
<dbReference type="Reactome" id="R-SCE-901042">
    <property type="pathway name" value="Calnexin/calreticulin cycle"/>
</dbReference>
<dbReference type="BioGRID-ORCS" id="850314">
    <property type="hits" value="10 hits in 10 CRISPR screens"/>
</dbReference>
<dbReference type="ChiTaRS" id="PDI1">
    <property type="organism name" value="yeast"/>
</dbReference>
<dbReference type="EvolutionaryTrace" id="P17967"/>
<dbReference type="PRO" id="PR:P17967"/>
<dbReference type="Proteomes" id="UP000002311">
    <property type="component" value="Chromosome III"/>
</dbReference>
<dbReference type="RNAct" id="P17967">
    <property type="molecule type" value="protein"/>
</dbReference>
<dbReference type="GO" id="GO:0005783">
    <property type="term" value="C:endoplasmic reticulum"/>
    <property type="evidence" value="ECO:0007005"/>
    <property type="project" value="SGD"/>
</dbReference>
<dbReference type="GO" id="GO:0005788">
    <property type="term" value="C:endoplasmic reticulum lumen"/>
    <property type="evidence" value="ECO:0000314"/>
    <property type="project" value="SGD"/>
</dbReference>
<dbReference type="GO" id="GO:0106055">
    <property type="term" value="C:mannosyl-oligosaccharide 1,2-alpha-mannosidase complex"/>
    <property type="evidence" value="ECO:0000353"/>
    <property type="project" value="ComplexPortal"/>
</dbReference>
<dbReference type="GO" id="GO:0003756">
    <property type="term" value="F:protein disulfide isomerase activity"/>
    <property type="evidence" value="ECO:0000314"/>
    <property type="project" value="SGD"/>
</dbReference>
<dbReference type="GO" id="GO:0015035">
    <property type="term" value="F:protein-disulfide reductase activity"/>
    <property type="evidence" value="ECO:0000314"/>
    <property type="project" value="SGD"/>
</dbReference>
<dbReference type="GO" id="GO:0051082">
    <property type="term" value="F:unfolded protein binding"/>
    <property type="evidence" value="ECO:0000314"/>
    <property type="project" value="SGD"/>
</dbReference>
<dbReference type="GO" id="GO:1900103">
    <property type="term" value="P:positive regulation of endoplasmic reticulum unfolded protein response"/>
    <property type="evidence" value="ECO:0000314"/>
    <property type="project" value="ComplexPortal"/>
</dbReference>
<dbReference type="GO" id="GO:0006457">
    <property type="term" value="P:protein folding"/>
    <property type="evidence" value="ECO:0000315"/>
    <property type="project" value="SGD"/>
</dbReference>
<dbReference type="GO" id="GO:0034976">
    <property type="term" value="P:response to endoplasmic reticulum stress"/>
    <property type="evidence" value="ECO:0000318"/>
    <property type="project" value="GO_Central"/>
</dbReference>
<dbReference type="CDD" id="cd02961">
    <property type="entry name" value="PDI_a_family"/>
    <property type="match status" value="1"/>
</dbReference>
<dbReference type="CDD" id="cd02995">
    <property type="entry name" value="PDI_a_PDI_a'_C"/>
    <property type="match status" value="1"/>
</dbReference>
<dbReference type="CDD" id="cd02982">
    <property type="entry name" value="PDI_b'_family"/>
    <property type="match status" value="1"/>
</dbReference>
<dbReference type="CDD" id="cd02981">
    <property type="entry name" value="PDI_b_family"/>
    <property type="match status" value="1"/>
</dbReference>
<dbReference type="FunFam" id="3.40.30.10:FF:000139">
    <property type="entry name" value="Protein disulfide-isomerase"/>
    <property type="match status" value="1"/>
</dbReference>
<dbReference type="FunFam" id="3.40.30.10:FF:000154">
    <property type="entry name" value="Protein disulfide-isomerase"/>
    <property type="match status" value="1"/>
</dbReference>
<dbReference type="FunFam" id="3.40.30.10:FF:000017">
    <property type="entry name" value="Protein disulfide-isomerase A4"/>
    <property type="match status" value="1"/>
</dbReference>
<dbReference type="Gene3D" id="3.40.30.10">
    <property type="entry name" value="Glutaredoxin"/>
    <property type="match status" value="4"/>
</dbReference>
<dbReference type="InterPro" id="IPR005792">
    <property type="entry name" value="Prot_disulphide_isomerase"/>
</dbReference>
<dbReference type="InterPro" id="IPR036249">
    <property type="entry name" value="Thioredoxin-like_sf"/>
</dbReference>
<dbReference type="InterPro" id="IPR017937">
    <property type="entry name" value="Thioredoxin_CS"/>
</dbReference>
<dbReference type="InterPro" id="IPR013766">
    <property type="entry name" value="Thioredoxin_domain"/>
</dbReference>
<dbReference type="NCBIfam" id="TIGR01130">
    <property type="entry name" value="ER_PDI_fam"/>
    <property type="match status" value="1"/>
</dbReference>
<dbReference type="PANTHER" id="PTHR18929">
    <property type="entry name" value="PROTEIN DISULFIDE ISOMERASE"/>
    <property type="match status" value="1"/>
</dbReference>
<dbReference type="PANTHER" id="PTHR18929:SF132">
    <property type="entry name" value="PROTEIN DISULFIDE-ISOMERASE A3"/>
    <property type="match status" value="1"/>
</dbReference>
<dbReference type="Pfam" id="PF00085">
    <property type="entry name" value="Thioredoxin"/>
    <property type="match status" value="2"/>
</dbReference>
<dbReference type="Pfam" id="PF13848">
    <property type="entry name" value="Thioredoxin_6"/>
    <property type="match status" value="1"/>
</dbReference>
<dbReference type="PRINTS" id="PR00421">
    <property type="entry name" value="THIOREDOXIN"/>
</dbReference>
<dbReference type="SUPFAM" id="SSF52833">
    <property type="entry name" value="Thioredoxin-like"/>
    <property type="match status" value="4"/>
</dbReference>
<dbReference type="PROSITE" id="PS00014">
    <property type="entry name" value="ER_TARGET"/>
    <property type="match status" value="1"/>
</dbReference>
<dbReference type="PROSITE" id="PS00194">
    <property type="entry name" value="THIOREDOXIN_1"/>
    <property type="match status" value="2"/>
</dbReference>
<dbReference type="PROSITE" id="PS51352">
    <property type="entry name" value="THIOREDOXIN_2"/>
    <property type="match status" value="2"/>
</dbReference>
<evidence type="ECO:0000250" key="1"/>
<evidence type="ECO:0000255" key="2"/>
<evidence type="ECO:0000255" key="3">
    <source>
        <dbReference type="PROSITE-ProRule" id="PRU00691"/>
    </source>
</evidence>
<evidence type="ECO:0000255" key="4">
    <source>
        <dbReference type="PROSITE-ProRule" id="PRU10138"/>
    </source>
</evidence>
<evidence type="ECO:0000256" key="5">
    <source>
        <dbReference type="SAM" id="MobiDB-lite"/>
    </source>
</evidence>
<evidence type="ECO:0000269" key="6">
    <source>
    </source>
</evidence>
<evidence type="ECO:0000269" key="7">
    <source>
    </source>
</evidence>
<evidence type="ECO:0000269" key="8">
    <source>
    </source>
</evidence>
<evidence type="ECO:0000269" key="9">
    <source>
    </source>
</evidence>
<evidence type="ECO:0000305" key="10"/>
<evidence type="ECO:0007829" key="11">
    <source>
        <dbReference type="PDB" id="2B5E"/>
    </source>
</evidence>
<evidence type="ECO:0007829" key="12">
    <source>
        <dbReference type="PDB" id="8ZPW"/>
    </source>
</evidence>
<reference key="1">
    <citation type="journal article" date="1991" name="J. Biochem.">
        <title>Molecular structure of a yeast gene, PDI1, encoding protein disulfide isomerase that is essential for cell growth.</title>
        <authorList>
            <person name="Tachikawa H."/>
            <person name="Miura T."/>
            <person name="Katakura Y."/>
            <person name="Mizunaga T."/>
        </authorList>
    </citation>
    <scope>NUCLEOTIDE SEQUENCE [GENOMIC DNA]</scope>
    <scope>PARTIAL PROTEIN SEQUENCE</scope>
    <source>
        <strain>ATCC 26786 / X2180-1A</strain>
        <strain>TM5</strain>
    </source>
</reference>
<reference key="2">
    <citation type="journal article" date="1991" name="Yeast">
        <title>Determination of the sequence of the yeast YCL313 gene localized on chromosome III. Homology with the protein disulfide isomerase (PDI gene product) of other organisms.</title>
        <authorList>
            <person name="Scherens B."/>
            <person name="Dubois E."/>
            <person name="Messenguy F."/>
        </authorList>
    </citation>
    <scope>NUCLEOTIDE SEQUENCE [GENOMIC DNA]</scope>
</reference>
<reference key="3">
    <citation type="journal article" date="1991" name="Proc. Natl. Acad. Sci. U.S.A.">
        <title>Glycosylation site binding protein and protein disulfide isomerase are identical and essential for cell viability in yeast.</title>
        <authorList>
            <person name="Lamantia M."/>
            <person name="Miura T."/>
            <person name="Tachikawa H."/>
            <person name="Kaplan H.A."/>
            <person name="Lennarz W.J."/>
            <person name="Mizunaga T."/>
        </authorList>
    </citation>
    <scope>NUCLEOTIDE SEQUENCE [GENOMIC DNA]</scope>
</reference>
<reference key="4">
    <citation type="journal article" date="1991" name="J. Biol. Chem.">
        <title>The Saccharomyces cerevisiae TRG1 gene is essential for growth and encodes a lumenal endoplasmic reticulum glycoprotein involved in the maturation of vacuolar carboxypeptidase.</title>
        <authorList>
            <person name="Guenther R."/>
            <person name="Braeuer C."/>
            <person name="Janetzky B."/>
            <person name="Foerster H.H."/>
            <person name="Ehbrecht I.M."/>
            <person name="Lehle L."/>
            <person name="Kuentzel H."/>
        </authorList>
    </citation>
    <scope>NUCLEOTIDE SEQUENCE [GENOMIC DNA]</scope>
</reference>
<reference key="5">
    <citation type="journal article" date="1991" name="Gene">
        <title>Protein disulfide isomerase is essential for viability in Saccharomyces cerevisiae.</title>
        <authorList>
            <person name="Farquhar R."/>
            <person name="Honey N."/>
            <person name="Murant S.J."/>
            <person name="Bossier P."/>
            <person name="Schultz L."/>
            <person name="Montogomery D."/>
            <person name="Ellis R.W."/>
            <person name="Freedman R.B."/>
            <person name="Tuite M.F."/>
        </authorList>
    </citation>
    <scope>NUCLEOTIDE SEQUENCE [GENOMIC DNA]</scope>
</reference>
<reference key="6">
    <citation type="journal article" date="1992" name="Yeast">
        <title>The complete sequence of a 9,543 bp segment on the left arm of chromosome III reveals five open reading frames including glucokinase and the protein disulfide isomerase.</title>
        <authorList>
            <person name="Scherens B."/>
            <person name="Messenguy F."/>
            <person name="Gigot D."/>
            <person name="Dubois E."/>
        </authorList>
    </citation>
    <scope>NUCLEOTIDE SEQUENCE [GENOMIC DNA]</scope>
</reference>
<reference key="7">
    <citation type="journal article" date="1992" name="Nature">
        <title>The complete DNA sequence of yeast chromosome III.</title>
        <authorList>
            <person name="Oliver S.G."/>
            <person name="van der Aart Q.J.M."/>
            <person name="Agostoni-Carbone M.L."/>
            <person name="Aigle M."/>
            <person name="Alberghina L."/>
            <person name="Alexandraki D."/>
            <person name="Antoine G."/>
            <person name="Anwar R."/>
            <person name="Ballesta J.P.G."/>
            <person name="Benit P."/>
            <person name="Berben G."/>
            <person name="Bergantino E."/>
            <person name="Biteau N."/>
            <person name="Bolle P.-A."/>
            <person name="Bolotin-Fukuhara M."/>
            <person name="Brown A."/>
            <person name="Brown A.J.P."/>
            <person name="Buhler J.-M."/>
            <person name="Carcano C."/>
            <person name="Carignani G."/>
            <person name="Cederberg H."/>
            <person name="Chanet R."/>
            <person name="Contreras R."/>
            <person name="Crouzet M."/>
            <person name="Daignan-Fornier B."/>
            <person name="Defoor E."/>
            <person name="Delgado M.D."/>
            <person name="Demolder J."/>
            <person name="Doira C."/>
            <person name="Dubois E."/>
            <person name="Dujon B."/>
            <person name="Duesterhoeft A."/>
            <person name="Erdmann D."/>
            <person name="Esteban M."/>
            <person name="Fabre F."/>
            <person name="Fairhead C."/>
            <person name="Faye G."/>
            <person name="Feldmann H."/>
            <person name="Fiers W."/>
            <person name="Francingues-Gaillard M.-C."/>
            <person name="Franco L."/>
            <person name="Frontali L."/>
            <person name="Fukuhara H."/>
            <person name="Fuller L.J."/>
            <person name="Galland P."/>
            <person name="Gent M.E."/>
            <person name="Gigot D."/>
            <person name="Gilliquet V."/>
            <person name="Glansdorff N."/>
            <person name="Goffeau A."/>
            <person name="Grenson M."/>
            <person name="Grisanti P."/>
            <person name="Grivell L.A."/>
            <person name="de Haan M."/>
            <person name="Haasemann M."/>
            <person name="Hatat D."/>
            <person name="Hoenicka J."/>
            <person name="Hegemann J.H."/>
            <person name="Herbert C.J."/>
            <person name="Hilger F."/>
            <person name="Hohmann S."/>
            <person name="Hollenberg C.P."/>
            <person name="Huse K."/>
            <person name="Iborra F."/>
            <person name="Indge K.J."/>
            <person name="Isono K."/>
            <person name="Jacq C."/>
            <person name="Jacquet M."/>
            <person name="James C.M."/>
            <person name="Jauniaux J.-C."/>
            <person name="Jia Y."/>
            <person name="Jimenez A."/>
            <person name="Kelly A."/>
            <person name="Kleinhans U."/>
            <person name="Kreisl P."/>
            <person name="Lanfranchi G."/>
            <person name="Lewis C."/>
            <person name="van der Linden C.G."/>
            <person name="Lucchini G."/>
            <person name="Lutzenkirchen K."/>
            <person name="Maat M.J."/>
            <person name="Mallet L."/>
            <person name="Mannhaupt G."/>
            <person name="Martegani E."/>
            <person name="Mathieu A."/>
            <person name="Maurer C.T.C."/>
            <person name="McConnell D."/>
            <person name="McKee R.A."/>
            <person name="Messenguy F."/>
            <person name="Mewes H.-W."/>
            <person name="Molemans F."/>
            <person name="Montague M.A."/>
            <person name="Muzi Falconi M."/>
            <person name="Navas L."/>
            <person name="Newlon C.S."/>
            <person name="Noone D."/>
            <person name="Pallier C."/>
            <person name="Panzeri L."/>
            <person name="Pearson B.M."/>
            <person name="Perea J."/>
            <person name="Philippsen P."/>
            <person name="Pierard A."/>
            <person name="Planta R.J."/>
            <person name="Plevani P."/>
            <person name="Poetsch B."/>
            <person name="Pohl F.M."/>
            <person name="Purnelle B."/>
            <person name="Ramezani Rad M."/>
            <person name="Rasmussen S.W."/>
            <person name="Raynal A."/>
            <person name="Remacha M.A."/>
            <person name="Richterich P."/>
            <person name="Roberts A.B."/>
            <person name="Rodriguez F."/>
            <person name="Sanz E."/>
            <person name="Schaaff-Gerstenschlaeger I."/>
            <person name="Scherens B."/>
            <person name="Schweitzer B."/>
            <person name="Shu Y."/>
            <person name="Skala J."/>
            <person name="Slonimski P.P."/>
            <person name="Sor F."/>
            <person name="Soustelle C."/>
            <person name="Spiegelberg R."/>
            <person name="Stateva L.I."/>
            <person name="Steensma H.Y."/>
            <person name="Steiner S."/>
            <person name="Thierry A."/>
            <person name="Thireos G."/>
            <person name="Tzermia M."/>
            <person name="Urrestarazu L.A."/>
            <person name="Valle G."/>
            <person name="Vetter I."/>
            <person name="van Vliet-Reedijk J.C."/>
            <person name="Voet M."/>
            <person name="Volckaert G."/>
            <person name="Vreken P."/>
            <person name="Wang H."/>
            <person name="Warmington J.R."/>
            <person name="von Wettstein D."/>
            <person name="Wicksteed B.L."/>
            <person name="Wilson C."/>
            <person name="Wurst H."/>
            <person name="Xu G."/>
            <person name="Yoshikawa A."/>
            <person name="Zimmermann F.K."/>
            <person name="Sgouros J.G."/>
        </authorList>
    </citation>
    <scope>NUCLEOTIDE SEQUENCE [LARGE SCALE GENOMIC DNA]</scope>
    <source>
        <strain>ATCC 204508 / S288c</strain>
    </source>
</reference>
<reference key="8">
    <citation type="journal article" date="2014" name="G3 (Bethesda)">
        <title>The reference genome sequence of Saccharomyces cerevisiae: Then and now.</title>
        <authorList>
            <person name="Engel S.R."/>
            <person name="Dietrich F.S."/>
            <person name="Fisk D.G."/>
            <person name="Binkley G."/>
            <person name="Balakrishnan R."/>
            <person name="Costanzo M.C."/>
            <person name="Dwight S.S."/>
            <person name="Hitz B.C."/>
            <person name="Karra K."/>
            <person name="Nash R.S."/>
            <person name="Weng S."/>
            <person name="Wong E.D."/>
            <person name="Lloyd P."/>
            <person name="Skrzypek M.S."/>
            <person name="Miyasato S.R."/>
            <person name="Simison M."/>
            <person name="Cherry J.M."/>
        </authorList>
    </citation>
    <scope>GENOME REANNOTATION</scope>
    <source>
        <strain>ATCC 204508 / S288c</strain>
    </source>
</reference>
<reference key="9">
    <citation type="journal article" date="2005" name="J. Biol. Chem.">
        <title>Interactions among yeast protein-disulfide isomerase proteins and endoplasmic reticulum chaperone proteins influence their activities.</title>
        <authorList>
            <person name="Kimura T."/>
            <person name="Hosoda Y."/>
            <person name="Sato Y."/>
            <person name="Kitamura Y."/>
            <person name="Ikeda T."/>
            <person name="Horibe T."/>
            <person name="Kikuchi M."/>
        </authorList>
    </citation>
    <scope>FUNCTION</scope>
    <scope>INTERACTION WITH EPS1 AND KAR2</scope>
</reference>
<reference key="10">
    <citation type="journal article" date="2009" name="J. Cell Biol.">
        <title>Htm1 protein generates the N-glycan signal for glycoprotein degradation in the endoplasmic reticulum.</title>
        <authorList>
            <person name="Clerc S."/>
            <person name="Hirsch C."/>
            <person name="Oggier D.M."/>
            <person name="Deprez P."/>
            <person name="Jakob C."/>
            <person name="Sommer T."/>
            <person name="Aebi M."/>
        </authorList>
    </citation>
    <scope>FUNCTION</scope>
    <scope>INTERACTION WITH MNL1</scope>
</reference>
<reference key="11">
    <citation type="journal article" date="2011" name="Mol. Cell">
        <title>A complex of Pdi1p and the mannosidase Htm1p initiates clearance of unfolded glycoproteins from the endoplasmic reticulum.</title>
        <authorList>
            <person name="Gauss R."/>
            <person name="Kanehara K."/>
            <person name="Carvalho P."/>
            <person name="Ng D.T."/>
            <person name="Aebi M."/>
        </authorList>
    </citation>
    <scope>FUNCTION</scope>
    <scope>INTERACTION WITH MNL1</scope>
</reference>
<reference key="12">
    <citation type="journal article" date="2006" name="Cell">
        <title>The crystal structure of yeast protein disulfide isomerase suggests cooperativity between its active sites.</title>
        <authorList>
            <person name="Tian G."/>
            <person name="Xiang S."/>
            <person name="Noiva R."/>
            <person name="Lennarz W.J."/>
            <person name="Schindelin H."/>
        </authorList>
    </citation>
    <scope>X-RAY CRYSTALLOGRAPHY (2.4 ANGSTROMS) OF 23-522</scope>
    <scope>DISULFIDE BONDS</scope>
</reference>
<proteinExistence type="evidence at protein level"/>
<comment type="function">
    <text evidence="6 8 9">Protein disulfide isomerase of ER lumen required for formation of disulfide bonds in secretory and cell-surface proteins and which unscrambles non-native disulfide bonds. Forms a complex with MNL1 to process unfolded protein-bound Man8GlcNAc2 oligosaccharides to Man7GlcNAc2, promoting degradation in unfolded protein response.</text>
</comment>
<comment type="catalytic activity">
    <reaction>
        <text>Catalyzes the rearrangement of -S-S- bonds in proteins.</text>
        <dbReference type="EC" id="5.3.4.1"/>
    </reaction>
</comment>
<comment type="subunit">
    <text evidence="6 8 9">Interacts with EPS1, KAR2 and MNL1.</text>
</comment>
<comment type="interaction">
    <interactant intactId="EBI-13012">
        <id>P17967</id>
    </interactant>
    <interactant intactId="EBI-24256">
        <id>P38888</id>
        <label>MNL1</label>
    </interactant>
    <organismsDiffer>false</organismsDiffer>
    <experiments>5</experiments>
</comment>
<comment type="interaction">
    <interactant intactId="EBI-13012">
        <id>P17967</id>
    </interactant>
    <interactant intactId="EBI-908364">
        <id>P61823</id>
        <label>RNASE1</label>
    </interactant>
    <organismsDiffer>true</organismsDiffer>
    <experiments>2</experiments>
</comment>
<comment type="subcellular location">
    <subcellularLocation>
        <location evidence="4">Endoplasmic reticulum lumen</location>
    </subcellularLocation>
</comment>
<comment type="PTM">
    <text>The N-terminus is blocked.</text>
</comment>
<comment type="similarity">
    <text evidence="10">Belongs to the protein disulfide isomerase family.</text>
</comment>
<feature type="signal peptide" description="Or 22" evidence="2">
    <location>
        <begin position="1"/>
        <end position="28"/>
    </location>
</feature>
<feature type="chain" id="PRO_0000034218" description="Protein disulfide-isomerase">
    <location>
        <begin position="29"/>
        <end position="522"/>
    </location>
</feature>
<feature type="domain" description="Thioredoxin 1" evidence="3">
    <location>
        <begin position="29"/>
        <end position="141"/>
    </location>
</feature>
<feature type="domain" description="Thioredoxin 2" evidence="3">
    <location>
        <begin position="356"/>
        <end position="485"/>
    </location>
</feature>
<feature type="region of interest" description="Disordered" evidence="5">
    <location>
        <begin position="497"/>
        <end position="522"/>
    </location>
</feature>
<feature type="short sequence motif" description="Prevents secretion from ER">
    <location>
        <begin position="519"/>
        <end position="522"/>
    </location>
</feature>
<feature type="compositionally biased region" description="Acidic residues" evidence="5">
    <location>
        <begin position="504"/>
        <end position="522"/>
    </location>
</feature>
<feature type="active site" description="Nucleophile" evidence="1">
    <location>
        <position position="61"/>
    </location>
</feature>
<feature type="active site" description="Nucleophile" evidence="1">
    <location>
        <position position="64"/>
    </location>
</feature>
<feature type="active site" description="Nucleophile" evidence="1">
    <location>
        <position position="406"/>
    </location>
</feature>
<feature type="active site" description="Nucleophile" evidence="1">
    <location>
        <position position="409"/>
    </location>
</feature>
<feature type="site" description="Contributes to redox potential value" evidence="1">
    <location>
        <position position="62"/>
    </location>
</feature>
<feature type="site" description="Contributes to redox potential value" evidence="1">
    <location>
        <position position="63"/>
    </location>
</feature>
<feature type="site" description="Lowers pKa of C-terminal Cys of first active site" evidence="1">
    <location>
        <position position="126"/>
    </location>
</feature>
<feature type="site" description="Contributes to redox potential value" evidence="1">
    <location>
        <position position="407"/>
    </location>
</feature>
<feature type="site" description="Contributes to redox potential value" evidence="1">
    <location>
        <position position="408"/>
    </location>
</feature>
<feature type="site" description="Lowers pKa of C-terminal Cys of second active site" evidence="1">
    <location>
        <position position="471"/>
    </location>
</feature>
<feature type="glycosylation site" description="N-linked (GlcNAc...) asparagine" evidence="2">
    <location>
        <position position="82"/>
    </location>
</feature>
<feature type="glycosylation site" description="N-linked (GlcNAc...) asparagine" evidence="2">
    <location>
        <position position="117"/>
    </location>
</feature>
<feature type="glycosylation site" description="N-linked (GlcNAc...) asparagine" evidence="2">
    <location>
        <position position="155"/>
    </location>
</feature>
<feature type="glycosylation site" description="N-linked (GlcNAc...) asparagine" evidence="2">
    <location>
        <position position="174"/>
    </location>
</feature>
<feature type="glycosylation site" description="N-linked (GlcNAc...) asparagine" evidence="2">
    <location>
        <position position="425"/>
    </location>
</feature>
<feature type="disulfide bond" description="Redox-active" evidence="3 7">
    <location>
        <begin position="61"/>
        <end position="64"/>
    </location>
</feature>
<feature type="disulfide bond" description="Redox-active" evidence="3 7">
    <location>
        <begin position="406"/>
        <end position="409"/>
    </location>
</feature>
<feature type="sequence conflict" description="In Ref. 3; AAA34848." evidence="10" ref="3">
    <original>AVVKLATDSFNEYIQSHDLV</original>
    <variation>LSLSWPPTLSMNTFSRTTWW</variation>
    <location>
        <begin position="33"/>
        <end position="52"/>
    </location>
</feature>
<feature type="sequence conflict" description="In Ref. 4; CAA36550/AAA35169." evidence="10" ref="4">
    <original>I</original>
    <variation>V</variation>
    <location>
        <position position="83"/>
    </location>
</feature>
<feature type="sequence conflict" description="In Ref. 5; CAA38402." evidence="10" ref="5">
    <original>S</original>
    <variation>R</variation>
    <location>
        <position position="114"/>
    </location>
</feature>
<feature type="sequence conflict" description="In Ref. 4." evidence="10" ref="4">
    <original>V</original>
    <variation>S</variation>
    <location>
        <position position="143"/>
    </location>
</feature>
<feature type="sequence conflict" description="In Ref. 4." evidence="10" ref="4">
    <location>
        <position position="146"/>
    </location>
</feature>
<feature type="sequence conflict" description="In Ref. 4; CAA36550/AAA35169." evidence="10" ref="4">
    <original>K</original>
    <variation>E</variation>
    <location>
        <position position="168"/>
    </location>
</feature>
<feature type="sequence conflict" description="In Ref. 3; AAA34848." evidence="10" ref="3">
    <original>D</original>
    <variation>E</variation>
    <location>
        <position position="197"/>
    </location>
</feature>
<feature type="sequence conflict" description="In Ref. 1; AA sequence." evidence="10" ref="1">
    <original>V</original>
    <variation>R</variation>
    <location>
        <position position="215"/>
    </location>
</feature>
<feature type="sequence conflict" description="In Ref. 4; CAA36550/AAA35169." evidence="10" ref="4">
    <original>A</original>
    <variation>V</variation>
    <location>
        <position position="226"/>
    </location>
</feature>
<feature type="sequence conflict" description="In Ref. 1; AA sequence." evidence="10" ref="1">
    <original>E</original>
    <variation>S</variation>
    <location>
        <position position="333"/>
    </location>
</feature>
<feature type="sequence conflict" description="In Ref. 3; AAA34848." evidence="10" ref="3">
    <original>S</original>
    <variation>P</variation>
    <location>
        <position position="351"/>
    </location>
</feature>
<feature type="sequence conflict" description="In Ref. 3; AAA34848." evidence="10" ref="3">
    <original>L</original>
    <variation>F</variation>
    <location>
        <position position="455"/>
    </location>
</feature>
<feature type="sequence conflict" description="In Ref. 4; CAA36550/AAA35169." evidence="10" ref="4">
    <original>G</original>
    <variation>S</variation>
    <location>
        <position position="458"/>
    </location>
</feature>
<feature type="sequence conflict" description="In Ref. 4 and 5." evidence="10" ref="4 5">
    <original>A</original>
    <variation>AEADAEAEA</variation>
    <location>
        <position position="505"/>
    </location>
</feature>
<feature type="turn" evidence="11">
    <location>
        <begin position="39"/>
        <end position="41"/>
    </location>
</feature>
<feature type="helix" evidence="11">
    <location>
        <begin position="42"/>
        <end position="46"/>
    </location>
</feature>
<feature type="strand" evidence="11">
    <location>
        <begin position="50"/>
        <end position="57"/>
    </location>
</feature>
<feature type="strand" evidence="12">
    <location>
        <begin position="59"/>
        <end position="61"/>
    </location>
</feature>
<feature type="helix" evidence="11">
    <location>
        <begin position="62"/>
        <end position="77"/>
    </location>
</feature>
<feature type="turn" evidence="11">
    <location>
        <begin position="78"/>
        <end position="82"/>
    </location>
</feature>
<feature type="strand" evidence="11">
    <location>
        <begin position="84"/>
        <end position="89"/>
    </location>
</feature>
<feature type="turn" evidence="11">
    <location>
        <begin position="90"/>
        <end position="92"/>
    </location>
</feature>
<feature type="helix" evidence="11">
    <location>
        <begin position="94"/>
        <end position="99"/>
    </location>
</feature>
<feature type="strand" evidence="11">
    <location>
        <begin position="104"/>
        <end position="112"/>
    </location>
</feature>
<feature type="strand" evidence="11">
    <location>
        <begin position="119"/>
        <end position="121"/>
    </location>
</feature>
<feature type="helix" evidence="11">
    <location>
        <begin position="128"/>
        <end position="138"/>
    </location>
</feature>
<feature type="strand" evidence="11">
    <location>
        <begin position="142"/>
        <end position="145"/>
    </location>
</feature>
<feature type="helix" evidence="11">
    <location>
        <begin position="149"/>
        <end position="155"/>
    </location>
</feature>
<feature type="strand" evidence="11">
    <location>
        <begin position="162"/>
        <end position="168"/>
    </location>
</feature>
<feature type="helix" evidence="11">
    <location>
        <begin position="171"/>
        <end position="183"/>
    </location>
</feature>
<feature type="turn" evidence="11">
    <location>
        <begin position="184"/>
        <end position="187"/>
    </location>
</feature>
<feature type="strand" evidence="11">
    <location>
        <begin position="189"/>
        <end position="194"/>
    </location>
</feature>
<feature type="strand" evidence="12">
    <location>
        <begin position="196"/>
        <end position="198"/>
    </location>
</feature>
<feature type="strand" evidence="11">
    <location>
        <begin position="201"/>
        <end position="206"/>
    </location>
</feature>
<feature type="strand" evidence="11">
    <location>
        <begin position="209"/>
        <end position="215"/>
    </location>
</feature>
<feature type="helix" evidence="11">
    <location>
        <begin position="220"/>
        <end position="223"/>
    </location>
</feature>
<feature type="helix" evidence="11">
    <location>
        <begin position="226"/>
        <end position="236"/>
    </location>
</feature>
<feature type="helix" evidence="11">
    <location>
        <begin position="246"/>
        <end position="254"/>
    </location>
</feature>
<feature type="strand" evidence="11">
    <location>
        <begin position="259"/>
        <end position="266"/>
    </location>
</feature>
<feature type="helix" evidence="11">
    <location>
        <begin position="267"/>
        <end position="283"/>
    </location>
</feature>
<feature type="turn" evidence="11">
    <location>
        <begin position="284"/>
        <end position="287"/>
    </location>
</feature>
<feature type="strand" evidence="11">
    <location>
        <begin position="289"/>
        <end position="294"/>
    </location>
</feature>
<feature type="helix" evidence="11">
    <location>
        <begin position="295"/>
        <end position="298"/>
    </location>
</feature>
<feature type="helix" evidence="11">
    <location>
        <begin position="301"/>
        <end position="304"/>
    </location>
</feature>
<feature type="strand" evidence="11">
    <location>
        <begin position="311"/>
        <end position="318"/>
    </location>
</feature>
<feature type="turn" evidence="11">
    <location>
        <begin position="319"/>
        <end position="322"/>
    </location>
</feature>
<feature type="strand" evidence="11">
    <location>
        <begin position="323"/>
        <end position="326"/>
    </location>
</feature>
<feature type="helix" evidence="11">
    <location>
        <begin position="332"/>
        <end position="336"/>
    </location>
</feature>
<feature type="helix" evidence="11">
    <location>
        <begin position="346"/>
        <end position="358"/>
    </location>
</feature>
<feature type="strand" evidence="11">
    <location>
        <begin position="377"/>
        <end position="381"/>
    </location>
</feature>
<feature type="turn" evidence="11">
    <location>
        <begin position="383"/>
        <end position="385"/>
    </location>
</feature>
<feature type="helix" evidence="11">
    <location>
        <begin position="386"/>
        <end position="391"/>
    </location>
</feature>
<feature type="strand" evidence="11">
    <location>
        <begin position="397"/>
        <end position="402"/>
    </location>
</feature>
<feature type="helix" evidence="11">
    <location>
        <begin position="407"/>
        <end position="426"/>
    </location>
</feature>
<feature type="strand" evidence="11">
    <location>
        <begin position="431"/>
        <end position="436"/>
    </location>
</feature>
<feature type="helix" evidence="11">
    <location>
        <begin position="437"/>
        <end position="439"/>
    </location>
</feature>
<feature type="strand" evidence="11">
    <location>
        <begin position="448"/>
        <end position="456"/>
    </location>
</feature>
<feature type="strand" evidence="12">
    <location>
        <begin position="458"/>
        <end position="461"/>
    </location>
</feature>
<feature type="helix" evidence="11">
    <location>
        <begin position="473"/>
        <end position="483"/>
    </location>
</feature>
<feature type="helix" evidence="11">
    <location>
        <begin position="490"/>
        <end position="501"/>
    </location>
</feature>
<protein>
    <recommendedName>
        <fullName>Protein disulfide-isomerase</fullName>
        <shortName>PDI</shortName>
        <ecNumber>5.3.4.1</ecNumber>
    </recommendedName>
    <alternativeName>
        <fullName>Thioredoxin-related glycoprotein 1</fullName>
    </alternativeName>
</protein>